<organism>
    <name type="scientific">Nicotiana sylvestris</name>
    <name type="common">Wood tobacco</name>
    <name type="synonym">South American tobacco</name>
    <dbReference type="NCBI Taxonomy" id="4096"/>
    <lineage>
        <taxon>Eukaryota</taxon>
        <taxon>Viridiplantae</taxon>
        <taxon>Streptophyta</taxon>
        <taxon>Embryophyta</taxon>
        <taxon>Tracheophyta</taxon>
        <taxon>Spermatophyta</taxon>
        <taxon>Magnoliopsida</taxon>
        <taxon>eudicotyledons</taxon>
        <taxon>Gunneridae</taxon>
        <taxon>Pentapetalae</taxon>
        <taxon>asterids</taxon>
        <taxon>lamiids</taxon>
        <taxon>Solanales</taxon>
        <taxon>Solanaceae</taxon>
        <taxon>Nicotianoideae</taxon>
        <taxon>Nicotianeae</taxon>
        <taxon>Nicotiana</taxon>
    </lineage>
</organism>
<keyword id="KW-0963">Cytoplasm</keyword>
<keyword id="KW-1017">Isopeptide bond</keyword>
<keyword id="KW-0539">Nucleus</keyword>
<keyword id="KW-1185">Reference proteome</keyword>
<keyword id="KW-0687">Ribonucleoprotein</keyword>
<keyword id="KW-0689">Ribosomal protein</keyword>
<keyword id="KW-0832">Ubl conjugation</keyword>
<proteinExistence type="evidence at transcript level"/>
<name>RL40_NICSY</name>
<dbReference type="EMBL" id="M74100">
    <property type="protein sequence ID" value="AAA34064.1"/>
    <property type="molecule type" value="mRNA"/>
</dbReference>
<dbReference type="PIR" id="S28420">
    <property type="entry name" value="S28420"/>
</dbReference>
<dbReference type="SMR" id="P49636"/>
<dbReference type="STRING" id="4096.P49636"/>
<dbReference type="eggNOG" id="KOG0003">
    <property type="taxonomic scope" value="Eukaryota"/>
</dbReference>
<dbReference type="Proteomes" id="UP000189701">
    <property type="component" value="Unplaced"/>
</dbReference>
<dbReference type="GO" id="GO:0005737">
    <property type="term" value="C:cytoplasm"/>
    <property type="evidence" value="ECO:0007669"/>
    <property type="project" value="UniProtKB-SubCell"/>
</dbReference>
<dbReference type="GO" id="GO:0005634">
    <property type="term" value="C:nucleus"/>
    <property type="evidence" value="ECO:0007669"/>
    <property type="project" value="UniProtKB-SubCell"/>
</dbReference>
<dbReference type="GO" id="GO:1990904">
    <property type="term" value="C:ribonucleoprotein complex"/>
    <property type="evidence" value="ECO:0007669"/>
    <property type="project" value="UniProtKB-KW"/>
</dbReference>
<dbReference type="GO" id="GO:0005840">
    <property type="term" value="C:ribosome"/>
    <property type="evidence" value="ECO:0007669"/>
    <property type="project" value="UniProtKB-KW"/>
</dbReference>
<dbReference type="GO" id="GO:0003729">
    <property type="term" value="F:mRNA binding"/>
    <property type="evidence" value="ECO:0007669"/>
    <property type="project" value="UniProtKB-ARBA"/>
</dbReference>
<dbReference type="GO" id="GO:0003735">
    <property type="term" value="F:structural constituent of ribosome"/>
    <property type="evidence" value="ECO:0007669"/>
    <property type="project" value="InterPro"/>
</dbReference>
<dbReference type="GO" id="GO:0006412">
    <property type="term" value="P:translation"/>
    <property type="evidence" value="ECO:0007669"/>
    <property type="project" value="InterPro"/>
</dbReference>
<dbReference type="CDD" id="cd01803">
    <property type="entry name" value="Ubl_ubiquitin"/>
    <property type="match status" value="1"/>
</dbReference>
<dbReference type="FunFam" id="3.10.20.90:FF:000014">
    <property type="entry name" value="Ubiquitin-60S ribosomal L40 fusion"/>
    <property type="match status" value="1"/>
</dbReference>
<dbReference type="FunFam" id="4.10.1060.50:FF:000001">
    <property type="entry name" value="ubiquitin-60S ribosomal protein L40"/>
    <property type="match status" value="1"/>
</dbReference>
<dbReference type="Gene3D" id="4.10.1060.50">
    <property type="match status" value="1"/>
</dbReference>
<dbReference type="Gene3D" id="3.10.20.90">
    <property type="entry name" value="Phosphatidylinositol 3-kinase Catalytic Subunit, Chain A, domain 1"/>
    <property type="match status" value="1"/>
</dbReference>
<dbReference type="InterPro" id="IPR001975">
    <property type="entry name" value="Ribosomal_eL40_dom"/>
</dbReference>
<dbReference type="InterPro" id="IPR038587">
    <property type="entry name" value="Ribosomal_eL40_sf"/>
</dbReference>
<dbReference type="InterPro" id="IPR011332">
    <property type="entry name" value="Ribosomal_zn-bd"/>
</dbReference>
<dbReference type="InterPro" id="IPR000626">
    <property type="entry name" value="Ubiquitin-like_dom"/>
</dbReference>
<dbReference type="InterPro" id="IPR029071">
    <property type="entry name" value="Ubiquitin-like_domsf"/>
</dbReference>
<dbReference type="InterPro" id="IPR019954">
    <property type="entry name" value="Ubiquitin_CS"/>
</dbReference>
<dbReference type="InterPro" id="IPR019956">
    <property type="entry name" value="Ubiquitin_dom"/>
</dbReference>
<dbReference type="InterPro" id="IPR050158">
    <property type="entry name" value="Ubiquitin_ubiquitin-like"/>
</dbReference>
<dbReference type="PANTHER" id="PTHR10666">
    <property type="entry name" value="UBIQUITIN"/>
    <property type="match status" value="1"/>
</dbReference>
<dbReference type="Pfam" id="PF01020">
    <property type="entry name" value="Ribosomal_L40e"/>
    <property type="match status" value="1"/>
</dbReference>
<dbReference type="Pfam" id="PF00240">
    <property type="entry name" value="ubiquitin"/>
    <property type="match status" value="1"/>
</dbReference>
<dbReference type="PRINTS" id="PR00348">
    <property type="entry name" value="UBIQUITIN"/>
</dbReference>
<dbReference type="SMART" id="SM01377">
    <property type="entry name" value="Ribosomal_L40e"/>
    <property type="match status" value="1"/>
</dbReference>
<dbReference type="SMART" id="SM00213">
    <property type="entry name" value="UBQ"/>
    <property type="match status" value="1"/>
</dbReference>
<dbReference type="SUPFAM" id="SSF54236">
    <property type="entry name" value="Ubiquitin-like"/>
    <property type="match status" value="1"/>
</dbReference>
<dbReference type="SUPFAM" id="SSF57829">
    <property type="entry name" value="Zn-binding ribosomal proteins"/>
    <property type="match status" value="1"/>
</dbReference>
<dbReference type="PROSITE" id="PS00299">
    <property type="entry name" value="UBIQUITIN_1"/>
    <property type="match status" value="1"/>
</dbReference>
<dbReference type="PROSITE" id="PS50053">
    <property type="entry name" value="UBIQUITIN_2"/>
    <property type="match status" value="1"/>
</dbReference>
<accession>P49636</accession>
<accession>O82079</accession>
<accession>P03993</accession>
<accession>P69320</accession>
<feature type="chain" id="PRO_0000114847" description="Ubiquitin">
    <location>
        <begin position="1"/>
        <end position="76"/>
    </location>
</feature>
<feature type="chain" id="PRO_0000138768" description="Large ribosomal subunit protein eL40">
    <location>
        <begin position="77"/>
        <end position="128"/>
    </location>
</feature>
<feature type="domain" description="Ubiquitin-like" evidence="2">
    <location>
        <begin position="1"/>
        <end position="76"/>
    </location>
</feature>
<feature type="cross-link" description="Glycyl lysine isopeptide (Lys-Gly) (interchain with G-Cter in ubiquitin)" evidence="1">
    <location>
        <position position="48"/>
    </location>
</feature>
<feature type="cross-link" description="Glycyl lysine isopeptide (Gly-Lys) (interchain with K-? in acceptor proteins)" evidence="2">
    <location>
        <position position="76"/>
    </location>
</feature>
<comment type="function">
    <molecule>Ubiquitin</molecule>
    <text evidence="1">Exists either covalently attached to another protein, or free (unanchored). When covalently bound, it is conjugated to target proteins via an isopeptide bond either as a monomer (monoubiquitin), a polymer linked via different Lys residues of the ubiquitin (polyubiquitin chains) or a linear polymer linked via the initiator Met of the ubiquitin (linear polyubiquitin chains). Polyubiquitin chains, when attached to a target protein, have different functions depending on the Lys residue of the ubiquitin that is linked: Lys-48-linked is involved in protein degradation via the proteasome. Linear polymer chains formed via attachment by the initiator Met lead to cell signaling. Ubiquitin is usually conjugated to Lys residues of target proteins, however, in rare cases, conjugation to Cys or Ser residues has been observed. When polyubiquitin is free (unanchored-polyubiquitin), it also has distinct roles, such as in activation of protein kinases, and in signaling (By similarity).</text>
</comment>
<comment type="function">
    <molecule>Large ribosomal subunit protein eL40</molecule>
    <text>Component of the 60S subunit of the ribosome.</text>
</comment>
<comment type="subunit">
    <molecule>Large ribosomal subunit protein eL40</molecule>
    <text evidence="1">Part of the 60S ribosomal subunit.</text>
</comment>
<comment type="subcellular location">
    <molecule>Ubiquitin</molecule>
    <subcellularLocation>
        <location evidence="1">Cytoplasm</location>
    </subcellularLocation>
    <subcellularLocation>
        <location evidence="1">Nucleus</location>
    </subcellularLocation>
</comment>
<comment type="subcellular location">
    <molecule>Large ribosomal subunit protein eL40</molecule>
    <subcellularLocation>
        <location evidence="1">Cytoplasm</location>
    </subcellularLocation>
</comment>
<comment type="miscellaneous">
    <text>Ubiquitin is generally synthesized as a polyubiquitin precursor with tandem head to tail repeats. Often, there are one to three additional amino acids after the last repeat, removed in the mature protein. Alternatively, ubiquitin extension protein is synthesized as a single copy of ubiquitin fused to a ribosomal protein (either eL40 or eS31) or to an ubiquitin-related protein (either RUB1 or RUB2). Following translation, extension protein is cleaved from ubiquitin.</text>
</comment>
<comment type="similarity">
    <text evidence="3">In the N-terminal section; belongs to the ubiquitin family.</text>
</comment>
<comment type="similarity">
    <text evidence="3">In the C-terminal section; belongs to the eukaryotic ribosomal protein eL40 family.</text>
</comment>
<evidence type="ECO:0000250" key="1"/>
<evidence type="ECO:0000255" key="2">
    <source>
        <dbReference type="PROSITE-ProRule" id="PRU00214"/>
    </source>
</evidence>
<evidence type="ECO:0000305" key="3"/>
<protein>
    <recommendedName>
        <fullName evidence="3">Ubiquitin-ribosomal protein eL40 fusion protein</fullName>
    </recommendedName>
    <component>
        <recommendedName>
            <fullName>Ubiquitin</fullName>
        </recommendedName>
    </component>
    <component>
        <recommendedName>
            <fullName evidence="3">Large ribosomal subunit protein eL40</fullName>
        </recommendedName>
        <alternativeName>
            <fullName>60S ribosomal protein L40</fullName>
        </alternativeName>
        <alternativeName>
            <fullName>CEP52</fullName>
        </alternativeName>
    </component>
</protein>
<sequence>MQIFVKTLTGKTITLEVESSDTIDNVKAKIQDKEGIPPDQQRLIFAGKQLEDGRTLADYNIQKESTLHLVLRLRGGIIEPSLMALARKYNQDKMICRKCYARLHPRAVNCRRKKCGHSNQLRPKKKIK</sequence>
<reference key="1">
    <citation type="journal article" date="1992" name="Plant Mol. Biol.">
        <title>Ubiquitin genes are differentially regulated in protoplast-derived cultures of Nicotiana sylvestris and in response to various stresses.</title>
        <authorList>
            <person name="Genschik P."/>
            <person name="Parmentier Y."/>
            <person name="Durr A."/>
            <person name="Marbach J."/>
            <person name="Criqui M.-C."/>
            <person name="Jamet E."/>
            <person name="Fleck J."/>
        </authorList>
    </citation>
    <scope>NUCLEOTIDE SEQUENCE [MRNA]</scope>
    <source>
        <tissue>Leaf</tissue>
    </source>
</reference>
<gene>
    <name type="primary">UBICEP52-7</name>
    <name type="synonym">RPL40</name>
</gene>